<keyword id="KW-0150">Chloroplast</keyword>
<keyword id="KW-0507">mRNA processing</keyword>
<keyword id="KW-0934">Plastid</keyword>
<keyword id="KW-0694">RNA-binding</keyword>
<keyword id="KW-0819">tRNA processing</keyword>
<comment type="function">
    <text evidence="1">Usually encoded in the trnK tRNA gene intron. Probably assists in splicing its own and other chloroplast group II introns.</text>
</comment>
<comment type="subcellular location">
    <subcellularLocation>
        <location>Plastid</location>
        <location>Chloroplast</location>
    </subcellularLocation>
</comment>
<comment type="similarity">
    <text evidence="1">Belongs to the intron maturase 2 family. MatK subfamily.</text>
</comment>
<gene>
    <name evidence="1" type="primary">matK</name>
</gene>
<accession>Q9MUY3</accession>
<evidence type="ECO:0000255" key="1">
    <source>
        <dbReference type="HAMAP-Rule" id="MF_01390"/>
    </source>
</evidence>
<proteinExistence type="inferred from homology"/>
<sequence length="513" mass="61138">MEKLEGYSEKPKSRQQYFVYPLLFQEYIYAFAHDYGLNGSEPVEIFGCNNKKFSSLLVKRLIIRMYQQNFWINSVNHPNQDRLLDHSNYFYSDFYSQILSEGFAIVVEIPFSLGELFCPEEKQIPKFQNLQSIHSIFPFLEDKFLHLHYLSHIEIPYPIHLEILVQLLEYRIQDVPSLHLLRFFLNYYSNWNSLITSMKSIFLLKKENKRLFRFLYNSYVSEYEFFLLFLRKQSSCLRLTSSGTFLERIHFSRKMEHLGVMYPGFFRKTIWFFMDPLMHYVRYQGKAILASKGTLLLKKKWKSYLVNFSQYFFSFWIQPQRICLNQLTNSCFDFLGYLSSVPINTLLVRNQMLENSFLIDTRMKKFDTTVPAIPLIGSLSKAQFCTGSGHPISKPVWTDLSDSDILDRFGRICRNLFHYHSGSSKKRTLYRLKYILRLSCARTLARKHKSTVRTFMQRLGSVFLEEFFTEEEQVFSLMFTKTTHFSFHGSHSERIWYLDIIRINDLVNPLILN</sequence>
<reference key="1">
    <citation type="journal article" date="1999" name="Ann. Mo. Bot. Gard.">
        <title>Phylogeny of Poaceae inferred from matK sequences.</title>
        <authorList>
            <person name="Hilu K.W."/>
            <person name="Alice L.A."/>
            <person name="Liang H."/>
        </authorList>
    </citation>
    <scope>NUCLEOTIDE SEQUENCE [GENOMIC DNA]</scope>
</reference>
<organism>
    <name type="scientific">Arundo donax</name>
    <name type="common">Giant reed</name>
    <name type="synonym">Donax arundinaceus</name>
    <dbReference type="NCBI Taxonomy" id="35708"/>
    <lineage>
        <taxon>Eukaryota</taxon>
        <taxon>Viridiplantae</taxon>
        <taxon>Streptophyta</taxon>
        <taxon>Embryophyta</taxon>
        <taxon>Tracheophyta</taxon>
        <taxon>Spermatophyta</taxon>
        <taxon>Magnoliopsida</taxon>
        <taxon>Liliopsida</taxon>
        <taxon>Poales</taxon>
        <taxon>Poaceae</taxon>
        <taxon>PACMAD clade</taxon>
        <taxon>Arundinoideae</taxon>
        <taxon>Arundineae</taxon>
        <taxon>Arundo</taxon>
    </lineage>
</organism>
<geneLocation type="chloroplast"/>
<name>MATK_ARUDO</name>
<dbReference type="EMBL" id="AF164408">
    <property type="protein sequence ID" value="AAF66195.1"/>
    <property type="molecule type" value="Genomic_DNA"/>
</dbReference>
<dbReference type="GO" id="GO:0009507">
    <property type="term" value="C:chloroplast"/>
    <property type="evidence" value="ECO:0007669"/>
    <property type="project" value="UniProtKB-SubCell"/>
</dbReference>
<dbReference type="GO" id="GO:0003723">
    <property type="term" value="F:RNA binding"/>
    <property type="evidence" value="ECO:0007669"/>
    <property type="project" value="UniProtKB-KW"/>
</dbReference>
<dbReference type="GO" id="GO:0006397">
    <property type="term" value="P:mRNA processing"/>
    <property type="evidence" value="ECO:0007669"/>
    <property type="project" value="UniProtKB-KW"/>
</dbReference>
<dbReference type="GO" id="GO:0008380">
    <property type="term" value="P:RNA splicing"/>
    <property type="evidence" value="ECO:0007669"/>
    <property type="project" value="UniProtKB-UniRule"/>
</dbReference>
<dbReference type="GO" id="GO:0008033">
    <property type="term" value="P:tRNA processing"/>
    <property type="evidence" value="ECO:0007669"/>
    <property type="project" value="UniProtKB-KW"/>
</dbReference>
<dbReference type="HAMAP" id="MF_01390">
    <property type="entry name" value="MatK"/>
    <property type="match status" value="1"/>
</dbReference>
<dbReference type="InterPro" id="IPR024937">
    <property type="entry name" value="Domain_X"/>
</dbReference>
<dbReference type="InterPro" id="IPR002866">
    <property type="entry name" value="Maturase_MatK"/>
</dbReference>
<dbReference type="InterPro" id="IPR024942">
    <property type="entry name" value="Maturase_MatK_N"/>
</dbReference>
<dbReference type="PANTHER" id="PTHR34811">
    <property type="entry name" value="MATURASE K"/>
    <property type="match status" value="1"/>
</dbReference>
<dbReference type="PANTHER" id="PTHR34811:SF1">
    <property type="entry name" value="MATURASE K"/>
    <property type="match status" value="1"/>
</dbReference>
<dbReference type="Pfam" id="PF01348">
    <property type="entry name" value="Intron_maturas2"/>
    <property type="match status" value="1"/>
</dbReference>
<dbReference type="Pfam" id="PF01824">
    <property type="entry name" value="MatK_N"/>
    <property type="match status" value="1"/>
</dbReference>
<feature type="chain" id="PRO_0000143259" description="Maturase K">
    <location>
        <begin position="1"/>
        <end position="513"/>
    </location>
</feature>
<protein>
    <recommendedName>
        <fullName evidence="1">Maturase K</fullName>
    </recommendedName>
    <alternativeName>
        <fullName evidence="1">Intron maturase</fullName>
    </alternativeName>
</protein>